<accession>C3KTV2</accession>
<feature type="chain" id="PRO_1000211761" description="Putative 3-methyladenine DNA glycosylase">
    <location>
        <begin position="1"/>
        <end position="203"/>
    </location>
</feature>
<sequence>MRLTRDFYAKDARVLAKELLGKVLVREVDGIKLKGKIVETEAYIGAIDKASHAYGGRRTKRTEPLYGKPGIAYVYFIYGKYFCFNIISKTEGEAEGVLIRALEPLENINLISKLRFNKEFEELNNYQRKNITSGPSKLCMAFNINRDNNWEDLCESSSLYVEDVFYNDFEIIETVRVGIDYAEEARDFLWRYYIKDNAFVSVK</sequence>
<name>3MGH_CLOB6</name>
<organism>
    <name type="scientific">Clostridium botulinum (strain 657 / Type Ba4)</name>
    <dbReference type="NCBI Taxonomy" id="515621"/>
    <lineage>
        <taxon>Bacteria</taxon>
        <taxon>Bacillati</taxon>
        <taxon>Bacillota</taxon>
        <taxon>Clostridia</taxon>
        <taxon>Eubacteriales</taxon>
        <taxon>Clostridiaceae</taxon>
        <taxon>Clostridium</taxon>
    </lineage>
</organism>
<gene>
    <name type="ordered locus">CLJ_B1308</name>
</gene>
<reference key="1">
    <citation type="submission" date="2008-05" db="EMBL/GenBank/DDBJ databases">
        <title>Genome sequence of Clostridium botulinum Ba4 strain 657.</title>
        <authorList>
            <person name="Shrivastava S."/>
            <person name="Brown J.L."/>
            <person name="Bruce D."/>
            <person name="Detter C."/>
            <person name="Munk C."/>
            <person name="Smith L.A."/>
            <person name="Smith T.J."/>
            <person name="Sutton G."/>
            <person name="Brettin T.S."/>
        </authorList>
    </citation>
    <scope>NUCLEOTIDE SEQUENCE [LARGE SCALE GENOMIC DNA]</scope>
    <source>
        <strain>657 / Type Ba4</strain>
    </source>
</reference>
<keyword id="KW-0227">DNA damage</keyword>
<keyword id="KW-0234">DNA repair</keyword>
<keyword id="KW-0378">Hydrolase</keyword>
<comment type="similarity">
    <text evidence="1">Belongs to the DNA glycosylase MPG family.</text>
</comment>
<dbReference type="EC" id="3.2.2.-" evidence="1"/>
<dbReference type="EMBL" id="CP001083">
    <property type="protein sequence ID" value="ACQ53719.1"/>
    <property type="molecule type" value="Genomic_DNA"/>
</dbReference>
<dbReference type="RefSeq" id="WP_003356430.1">
    <property type="nucleotide sequence ID" value="NC_012658.1"/>
</dbReference>
<dbReference type="SMR" id="C3KTV2"/>
<dbReference type="KEGG" id="cbi:CLJ_B1308"/>
<dbReference type="HOGENOM" id="CLU_060471_0_2_9"/>
<dbReference type="Proteomes" id="UP000002333">
    <property type="component" value="Chromosome"/>
</dbReference>
<dbReference type="GO" id="GO:0003905">
    <property type="term" value="F:alkylbase DNA N-glycosylase activity"/>
    <property type="evidence" value="ECO:0007669"/>
    <property type="project" value="InterPro"/>
</dbReference>
<dbReference type="GO" id="GO:0003677">
    <property type="term" value="F:DNA binding"/>
    <property type="evidence" value="ECO:0007669"/>
    <property type="project" value="InterPro"/>
</dbReference>
<dbReference type="GO" id="GO:0006284">
    <property type="term" value="P:base-excision repair"/>
    <property type="evidence" value="ECO:0007669"/>
    <property type="project" value="InterPro"/>
</dbReference>
<dbReference type="CDD" id="cd00540">
    <property type="entry name" value="AAG"/>
    <property type="match status" value="1"/>
</dbReference>
<dbReference type="FunFam" id="3.10.300.10:FF:000001">
    <property type="entry name" value="Putative 3-methyladenine DNA glycosylase"/>
    <property type="match status" value="1"/>
</dbReference>
<dbReference type="Gene3D" id="3.10.300.10">
    <property type="entry name" value="Methylpurine-DNA glycosylase (MPG)"/>
    <property type="match status" value="1"/>
</dbReference>
<dbReference type="HAMAP" id="MF_00527">
    <property type="entry name" value="3MGH"/>
    <property type="match status" value="1"/>
</dbReference>
<dbReference type="InterPro" id="IPR011034">
    <property type="entry name" value="Formyl_transferase-like_C_sf"/>
</dbReference>
<dbReference type="InterPro" id="IPR003180">
    <property type="entry name" value="MPG"/>
</dbReference>
<dbReference type="InterPro" id="IPR036995">
    <property type="entry name" value="MPG_sf"/>
</dbReference>
<dbReference type="NCBIfam" id="TIGR00567">
    <property type="entry name" value="3mg"/>
    <property type="match status" value="1"/>
</dbReference>
<dbReference type="NCBIfam" id="NF002001">
    <property type="entry name" value="PRK00802.1-1"/>
    <property type="match status" value="1"/>
</dbReference>
<dbReference type="PANTHER" id="PTHR10429">
    <property type="entry name" value="DNA-3-METHYLADENINE GLYCOSYLASE"/>
    <property type="match status" value="1"/>
</dbReference>
<dbReference type="PANTHER" id="PTHR10429:SF0">
    <property type="entry name" value="DNA-3-METHYLADENINE GLYCOSYLASE"/>
    <property type="match status" value="1"/>
</dbReference>
<dbReference type="Pfam" id="PF02245">
    <property type="entry name" value="Pur_DNA_glyco"/>
    <property type="match status" value="1"/>
</dbReference>
<dbReference type="SUPFAM" id="SSF50486">
    <property type="entry name" value="FMT C-terminal domain-like"/>
    <property type="match status" value="1"/>
</dbReference>
<evidence type="ECO:0000255" key="1">
    <source>
        <dbReference type="HAMAP-Rule" id="MF_00527"/>
    </source>
</evidence>
<protein>
    <recommendedName>
        <fullName evidence="1">Putative 3-methyladenine DNA glycosylase</fullName>
        <ecNumber evidence="1">3.2.2.-</ecNumber>
    </recommendedName>
</protein>
<proteinExistence type="inferred from homology"/>